<feature type="chain" id="PRO_1000079184" description="Probable GTP-binding protein EngB">
    <location>
        <begin position="1"/>
        <end position="220"/>
    </location>
</feature>
<feature type="domain" description="EngB-type G" evidence="1">
    <location>
        <begin position="31"/>
        <end position="205"/>
    </location>
</feature>
<feature type="binding site" evidence="1">
    <location>
        <begin position="39"/>
        <end position="46"/>
    </location>
    <ligand>
        <name>GTP</name>
        <dbReference type="ChEBI" id="CHEBI:37565"/>
    </ligand>
</feature>
<feature type="binding site" evidence="1">
    <location>
        <position position="46"/>
    </location>
    <ligand>
        <name>Mg(2+)</name>
        <dbReference type="ChEBI" id="CHEBI:18420"/>
    </ligand>
</feature>
<feature type="binding site" evidence="1">
    <location>
        <begin position="66"/>
        <end position="70"/>
    </location>
    <ligand>
        <name>GTP</name>
        <dbReference type="ChEBI" id="CHEBI:37565"/>
    </ligand>
</feature>
<feature type="binding site" evidence="1">
    <location>
        <position position="68"/>
    </location>
    <ligand>
        <name>Mg(2+)</name>
        <dbReference type="ChEBI" id="CHEBI:18420"/>
    </ligand>
</feature>
<feature type="binding site" evidence="1">
    <location>
        <begin position="84"/>
        <end position="87"/>
    </location>
    <ligand>
        <name>GTP</name>
        <dbReference type="ChEBI" id="CHEBI:37565"/>
    </ligand>
</feature>
<feature type="binding site" evidence="1">
    <location>
        <begin position="151"/>
        <end position="154"/>
    </location>
    <ligand>
        <name>GTP</name>
        <dbReference type="ChEBI" id="CHEBI:37565"/>
    </ligand>
</feature>
<feature type="binding site" evidence="1">
    <location>
        <begin position="184"/>
        <end position="186"/>
    </location>
    <ligand>
        <name>GTP</name>
        <dbReference type="ChEBI" id="CHEBI:37565"/>
    </ligand>
</feature>
<sequence>MSESCIDFRKAKFLISAPDIAHLNEHLPGDAGVEIAFAGRSNAGKSSALNLLTDQKSLARTSRTPGRTQLINIFELDENRRLVDLPGYGFAQVPLALKKKWQESLGEYLQERQCLGGMVVLMDIRHPLKDLDMQMIAWALESEIPVLALLTKADKLKQSERMKMVNEVRKHLGDFDDRVKVEPFSSLKGIGKAKVLGILNEWCHPQWLTDAIADAETEEE</sequence>
<name>ENGB_SHESH</name>
<comment type="function">
    <text evidence="1">Necessary for normal cell division and for the maintenance of normal septation.</text>
</comment>
<comment type="cofactor">
    <cofactor evidence="1">
        <name>Mg(2+)</name>
        <dbReference type="ChEBI" id="CHEBI:18420"/>
    </cofactor>
</comment>
<comment type="similarity">
    <text evidence="1">Belongs to the TRAFAC class TrmE-Era-EngA-EngB-Septin-like GTPase superfamily. EngB GTPase family.</text>
</comment>
<keyword id="KW-0131">Cell cycle</keyword>
<keyword id="KW-0132">Cell division</keyword>
<keyword id="KW-0342">GTP-binding</keyword>
<keyword id="KW-0460">Magnesium</keyword>
<keyword id="KW-0479">Metal-binding</keyword>
<keyword id="KW-0547">Nucleotide-binding</keyword>
<keyword id="KW-1185">Reference proteome</keyword>
<keyword id="KW-0717">Septation</keyword>
<reference key="1">
    <citation type="submission" date="2007-08" db="EMBL/GenBank/DDBJ databases">
        <title>Complete sequence of Shewanella sediminis HAW-EB3.</title>
        <authorList>
            <consortium name="US DOE Joint Genome Institute"/>
            <person name="Copeland A."/>
            <person name="Lucas S."/>
            <person name="Lapidus A."/>
            <person name="Barry K."/>
            <person name="Glavina del Rio T."/>
            <person name="Dalin E."/>
            <person name="Tice H."/>
            <person name="Pitluck S."/>
            <person name="Chertkov O."/>
            <person name="Brettin T."/>
            <person name="Bruce D."/>
            <person name="Detter J.C."/>
            <person name="Han C."/>
            <person name="Schmutz J."/>
            <person name="Larimer F."/>
            <person name="Land M."/>
            <person name="Hauser L."/>
            <person name="Kyrpides N."/>
            <person name="Kim E."/>
            <person name="Zhao J.-S."/>
            <person name="Richardson P."/>
        </authorList>
    </citation>
    <scope>NUCLEOTIDE SEQUENCE [LARGE SCALE GENOMIC DNA]</scope>
    <source>
        <strain>HAW-EB3</strain>
    </source>
</reference>
<protein>
    <recommendedName>
        <fullName evidence="1">Probable GTP-binding protein EngB</fullName>
    </recommendedName>
</protein>
<dbReference type="EMBL" id="CP000821">
    <property type="protein sequence ID" value="ABV34708.1"/>
    <property type="molecule type" value="Genomic_DNA"/>
</dbReference>
<dbReference type="RefSeq" id="WP_012004234.1">
    <property type="nucleotide sequence ID" value="NC_009831.1"/>
</dbReference>
<dbReference type="SMR" id="A8FPD5"/>
<dbReference type="STRING" id="425104.Ssed_0095"/>
<dbReference type="KEGG" id="sse:Ssed_0095"/>
<dbReference type="eggNOG" id="COG0218">
    <property type="taxonomic scope" value="Bacteria"/>
</dbReference>
<dbReference type="HOGENOM" id="CLU_033732_1_2_6"/>
<dbReference type="OrthoDB" id="9804921at2"/>
<dbReference type="Proteomes" id="UP000002015">
    <property type="component" value="Chromosome"/>
</dbReference>
<dbReference type="GO" id="GO:0005829">
    <property type="term" value="C:cytosol"/>
    <property type="evidence" value="ECO:0007669"/>
    <property type="project" value="TreeGrafter"/>
</dbReference>
<dbReference type="GO" id="GO:0005525">
    <property type="term" value="F:GTP binding"/>
    <property type="evidence" value="ECO:0007669"/>
    <property type="project" value="UniProtKB-UniRule"/>
</dbReference>
<dbReference type="GO" id="GO:0046872">
    <property type="term" value="F:metal ion binding"/>
    <property type="evidence" value="ECO:0007669"/>
    <property type="project" value="UniProtKB-KW"/>
</dbReference>
<dbReference type="GO" id="GO:0000917">
    <property type="term" value="P:division septum assembly"/>
    <property type="evidence" value="ECO:0007669"/>
    <property type="project" value="UniProtKB-KW"/>
</dbReference>
<dbReference type="CDD" id="cd01876">
    <property type="entry name" value="YihA_EngB"/>
    <property type="match status" value="1"/>
</dbReference>
<dbReference type="FunFam" id="3.40.50.300:FF:000098">
    <property type="entry name" value="Probable GTP-binding protein EngB"/>
    <property type="match status" value="1"/>
</dbReference>
<dbReference type="Gene3D" id="3.40.50.300">
    <property type="entry name" value="P-loop containing nucleotide triphosphate hydrolases"/>
    <property type="match status" value="1"/>
</dbReference>
<dbReference type="HAMAP" id="MF_00321">
    <property type="entry name" value="GTPase_EngB"/>
    <property type="match status" value="1"/>
</dbReference>
<dbReference type="InterPro" id="IPR030393">
    <property type="entry name" value="G_ENGB_dom"/>
</dbReference>
<dbReference type="InterPro" id="IPR006073">
    <property type="entry name" value="GTP-bd"/>
</dbReference>
<dbReference type="InterPro" id="IPR019987">
    <property type="entry name" value="GTP-bd_ribosome_bio_YsxC"/>
</dbReference>
<dbReference type="InterPro" id="IPR027417">
    <property type="entry name" value="P-loop_NTPase"/>
</dbReference>
<dbReference type="NCBIfam" id="TIGR03598">
    <property type="entry name" value="GTPase_YsxC"/>
    <property type="match status" value="1"/>
</dbReference>
<dbReference type="PANTHER" id="PTHR11649:SF13">
    <property type="entry name" value="ENGB-TYPE G DOMAIN-CONTAINING PROTEIN"/>
    <property type="match status" value="1"/>
</dbReference>
<dbReference type="PANTHER" id="PTHR11649">
    <property type="entry name" value="MSS1/TRME-RELATED GTP-BINDING PROTEIN"/>
    <property type="match status" value="1"/>
</dbReference>
<dbReference type="Pfam" id="PF01926">
    <property type="entry name" value="MMR_HSR1"/>
    <property type="match status" value="1"/>
</dbReference>
<dbReference type="SUPFAM" id="SSF52540">
    <property type="entry name" value="P-loop containing nucleoside triphosphate hydrolases"/>
    <property type="match status" value="1"/>
</dbReference>
<dbReference type="PROSITE" id="PS51706">
    <property type="entry name" value="G_ENGB"/>
    <property type="match status" value="1"/>
</dbReference>
<organism>
    <name type="scientific">Shewanella sediminis (strain HAW-EB3)</name>
    <dbReference type="NCBI Taxonomy" id="425104"/>
    <lineage>
        <taxon>Bacteria</taxon>
        <taxon>Pseudomonadati</taxon>
        <taxon>Pseudomonadota</taxon>
        <taxon>Gammaproteobacteria</taxon>
        <taxon>Alteromonadales</taxon>
        <taxon>Shewanellaceae</taxon>
        <taxon>Shewanella</taxon>
    </lineage>
</organism>
<evidence type="ECO:0000255" key="1">
    <source>
        <dbReference type="HAMAP-Rule" id="MF_00321"/>
    </source>
</evidence>
<proteinExistence type="inferred from homology"/>
<accession>A8FPD5</accession>
<gene>
    <name evidence="1" type="primary">engB</name>
    <name type="ordered locus">Ssed_0095</name>
</gene>